<dbReference type="EC" id="7.1.2.2" evidence="1"/>
<dbReference type="EMBL" id="CP001600">
    <property type="protein sequence ID" value="ACR71023.1"/>
    <property type="molecule type" value="Genomic_DNA"/>
</dbReference>
<dbReference type="RefSeq" id="WP_012850326.1">
    <property type="nucleotide sequence ID" value="NZ_CP169062.1"/>
</dbReference>
<dbReference type="SMR" id="C5BF40"/>
<dbReference type="STRING" id="67780.B6E78_11085"/>
<dbReference type="GeneID" id="72530307"/>
<dbReference type="KEGG" id="eic:NT01EI_3912"/>
<dbReference type="HOGENOM" id="CLU_022398_0_2_6"/>
<dbReference type="OrthoDB" id="9801639at2"/>
<dbReference type="Proteomes" id="UP000001485">
    <property type="component" value="Chromosome"/>
</dbReference>
<dbReference type="GO" id="GO:0005886">
    <property type="term" value="C:plasma membrane"/>
    <property type="evidence" value="ECO:0007669"/>
    <property type="project" value="UniProtKB-SubCell"/>
</dbReference>
<dbReference type="GO" id="GO:0045259">
    <property type="term" value="C:proton-transporting ATP synthase complex"/>
    <property type="evidence" value="ECO:0007669"/>
    <property type="project" value="UniProtKB-KW"/>
</dbReference>
<dbReference type="GO" id="GO:0005524">
    <property type="term" value="F:ATP binding"/>
    <property type="evidence" value="ECO:0007669"/>
    <property type="project" value="UniProtKB-UniRule"/>
</dbReference>
<dbReference type="GO" id="GO:0016887">
    <property type="term" value="F:ATP hydrolysis activity"/>
    <property type="evidence" value="ECO:0007669"/>
    <property type="project" value="InterPro"/>
</dbReference>
<dbReference type="GO" id="GO:0046933">
    <property type="term" value="F:proton-transporting ATP synthase activity, rotational mechanism"/>
    <property type="evidence" value="ECO:0007669"/>
    <property type="project" value="UniProtKB-UniRule"/>
</dbReference>
<dbReference type="CDD" id="cd18110">
    <property type="entry name" value="ATP-synt_F1_beta_C"/>
    <property type="match status" value="1"/>
</dbReference>
<dbReference type="CDD" id="cd18115">
    <property type="entry name" value="ATP-synt_F1_beta_N"/>
    <property type="match status" value="1"/>
</dbReference>
<dbReference type="CDD" id="cd01133">
    <property type="entry name" value="F1-ATPase_beta_CD"/>
    <property type="match status" value="1"/>
</dbReference>
<dbReference type="FunFam" id="1.10.1140.10:FF:000001">
    <property type="entry name" value="ATP synthase subunit beta"/>
    <property type="match status" value="1"/>
</dbReference>
<dbReference type="FunFam" id="2.40.10.170:FF:000003">
    <property type="entry name" value="ATP synthase subunit beta"/>
    <property type="match status" value="1"/>
</dbReference>
<dbReference type="FunFam" id="3.40.50.300:FF:000004">
    <property type="entry name" value="ATP synthase subunit beta"/>
    <property type="match status" value="1"/>
</dbReference>
<dbReference type="Gene3D" id="2.40.10.170">
    <property type="match status" value="1"/>
</dbReference>
<dbReference type="Gene3D" id="1.10.1140.10">
    <property type="entry name" value="Bovine Mitochondrial F1-atpase, Atp Synthase Beta Chain, Chain D, domain 3"/>
    <property type="match status" value="1"/>
</dbReference>
<dbReference type="Gene3D" id="3.40.50.300">
    <property type="entry name" value="P-loop containing nucleotide triphosphate hydrolases"/>
    <property type="match status" value="1"/>
</dbReference>
<dbReference type="HAMAP" id="MF_01347">
    <property type="entry name" value="ATP_synth_beta_bact"/>
    <property type="match status" value="1"/>
</dbReference>
<dbReference type="InterPro" id="IPR003593">
    <property type="entry name" value="AAA+_ATPase"/>
</dbReference>
<dbReference type="InterPro" id="IPR055190">
    <property type="entry name" value="ATP-synt_VA_C"/>
</dbReference>
<dbReference type="InterPro" id="IPR005722">
    <property type="entry name" value="ATP_synth_F1_bsu"/>
</dbReference>
<dbReference type="InterPro" id="IPR020003">
    <property type="entry name" value="ATPase_a/bsu_AS"/>
</dbReference>
<dbReference type="InterPro" id="IPR050053">
    <property type="entry name" value="ATPase_alpha/beta_chains"/>
</dbReference>
<dbReference type="InterPro" id="IPR004100">
    <property type="entry name" value="ATPase_F1/V1/A1_a/bsu_N"/>
</dbReference>
<dbReference type="InterPro" id="IPR036121">
    <property type="entry name" value="ATPase_F1/V1/A1_a/bsu_N_sf"/>
</dbReference>
<dbReference type="InterPro" id="IPR000194">
    <property type="entry name" value="ATPase_F1/V1/A1_a/bsu_nucl-bd"/>
</dbReference>
<dbReference type="InterPro" id="IPR024034">
    <property type="entry name" value="ATPase_F1/V1_b/a_C"/>
</dbReference>
<dbReference type="InterPro" id="IPR027417">
    <property type="entry name" value="P-loop_NTPase"/>
</dbReference>
<dbReference type="NCBIfam" id="TIGR01039">
    <property type="entry name" value="atpD"/>
    <property type="match status" value="1"/>
</dbReference>
<dbReference type="PANTHER" id="PTHR15184">
    <property type="entry name" value="ATP SYNTHASE"/>
    <property type="match status" value="1"/>
</dbReference>
<dbReference type="PANTHER" id="PTHR15184:SF71">
    <property type="entry name" value="ATP SYNTHASE SUBUNIT BETA, MITOCHONDRIAL"/>
    <property type="match status" value="1"/>
</dbReference>
<dbReference type="Pfam" id="PF00006">
    <property type="entry name" value="ATP-synt_ab"/>
    <property type="match status" value="1"/>
</dbReference>
<dbReference type="Pfam" id="PF02874">
    <property type="entry name" value="ATP-synt_ab_N"/>
    <property type="match status" value="1"/>
</dbReference>
<dbReference type="Pfam" id="PF22919">
    <property type="entry name" value="ATP-synt_VA_C"/>
    <property type="match status" value="1"/>
</dbReference>
<dbReference type="SMART" id="SM00382">
    <property type="entry name" value="AAA"/>
    <property type="match status" value="1"/>
</dbReference>
<dbReference type="SUPFAM" id="SSF47917">
    <property type="entry name" value="C-terminal domain of alpha and beta subunits of F1 ATP synthase"/>
    <property type="match status" value="1"/>
</dbReference>
<dbReference type="SUPFAM" id="SSF50615">
    <property type="entry name" value="N-terminal domain of alpha and beta subunits of F1 ATP synthase"/>
    <property type="match status" value="1"/>
</dbReference>
<dbReference type="SUPFAM" id="SSF52540">
    <property type="entry name" value="P-loop containing nucleoside triphosphate hydrolases"/>
    <property type="match status" value="1"/>
</dbReference>
<dbReference type="PROSITE" id="PS00152">
    <property type="entry name" value="ATPASE_ALPHA_BETA"/>
    <property type="match status" value="1"/>
</dbReference>
<protein>
    <recommendedName>
        <fullName evidence="1">ATP synthase subunit beta</fullName>
        <ecNumber evidence="1">7.1.2.2</ecNumber>
    </recommendedName>
    <alternativeName>
        <fullName evidence="1">ATP synthase F1 sector subunit beta</fullName>
    </alternativeName>
    <alternativeName>
        <fullName evidence="1">F-ATPase subunit beta</fullName>
    </alternativeName>
</protein>
<evidence type="ECO:0000255" key="1">
    <source>
        <dbReference type="HAMAP-Rule" id="MF_01347"/>
    </source>
</evidence>
<feature type="chain" id="PRO_1000214825" description="ATP synthase subunit beta">
    <location>
        <begin position="1"/>
        <end position="460"/>
    </location>
</feature>
<feature type="binding site" evidence="1">
    <location>
        <begin position="150"/>
        <end position="157"/>
    </location>
    <ligand>
        <name>ATP</name>
        <dbReference type="ChEBI" id="CHEBI:30616"/>
    </ligand>
</feature>
<organism>
    <name type="scientific">Edwardsiella ictaluri (strain 93-146)</name>
    <dbReference type="NCBI Taxonomy" id="634503"/>
    <lineage>
        <taxon>Bacteria</taxon>
        <taxon>Pseudomonadati</taxon>
        <taxon>Pseudomonadota</taxon>
        <taxon>Gammaproteobacteria</taxon>
        <taxon>Enterobacterales</taxon>
        <taxon>Hafniaceae</taxon>
        <taxon>Edwardsiella</taxon>
    </lineage>
</organism>
<sequence length="460" mass="50043">MATGKIIQVIGAVVDVEFPQDAVPKVYNALEVKGGATKLVLEVQQQLGGGVVRCIAMGSSDGLRRGLDVEDQNHPIEVPVGKATLGRIMNVLGDPVDMKGEIGEEERWAIHRAAPSYEDLSNSQELLETGIKVIDLICPFAKGGKVGLFGGAGVGKTVNMMELIRNIAIEHSGYSVFAGVGERTREGNDFYHEMTDSNVLDKVSLVYGQMNEPPGNRLRVALTGLTMAEKFRDEGRDVLLFIDNIYRYTLAGTEVSALLGRMPSAVGYQPTLAEEMGVLQERITSTKTGSITSVQAVYVPADDLTDPSPATTFAHLDATVVLSRQIASLGIYPAVDPLDSTSRQLDPLVVGQEHYDTARGVQSILQRYQELKDIIAILGMDELSEEDKLVVARARKIQRFLSQPFFVAEVFTGSPGKYVSLKDTIMGFKGIMNGDYDHLPEQAFYMVGSIDEAVEKAKKL</sequence>
<comment type="function">
    <text evidence="1">Produces ATP from ADP in the presence of a proton gradient across the membrane. The catalytic sites are hosted primarily by the beta subunits.</text>
</comment>
<comment type="catalytic activity">
    <reaction evidence="1">
        <text>ATP + H2O + 4 H(+)(in) = ADP + phosphate + 5 H(+)(out)</text>
        <dbReference type="Rhea" id="RHEA:57720"/>
        <dbReference type="ChEBI" id="CHEBI:15377"/>
        <dbReference type="ChEBI" id="CHEBI:15378"/>
        <dbReference type="ChEBI" id="CHEBI:30616"/>
        <dbReference type="ChEBI" id="CHEBI:43474"/>
        <dbReference type="ChEBI" id="CHEBI:456216"/>
        <dbReference type="EC" id="7.1.2.2"/>
    </reaction>
</comment>
<comment type="subunit">
    <text evidence="1">F-type ATPases have 2 components, CF(1) - the catalytic core - and CF(0) - the membrane proton channel. CF(1) has five subunits: alpha(3), beta(3), gamma(1), delta(1), epsilon(1). CF(0) has three main subunits: a(1), b(2) and c(9-12). The alpha and beta chains form an alternating ring which encloses part of the gamma chain. CF(1) is attached to CF(0) by a central stalk formed by the gamma and epsilon chains, while a peripheral stalk is formed by the delta and b chains.</text>
</comment>
<comment type="subcellular location">
    <subcellularLocation>
        <location evidence="1">Cell inner membrane</location>
        <topology evidence="1">Peripheral membrane protein</topology>
    </subcellularLocation>
</comment>
<comment type="similarity">
    <text evidence="1">Belongs to the ATPase alpha/beta chains family.</text>
</comment>
<proteinExistence type="inferred from homology"/>
<keyword id="KW-0066">ATP synthesis</keyword>
<keyword id="KW-0067">ATP-binding</keyword>
<keyword id="KW-0997">Cell inner membrane</keyword>
<keyword id="KW-1003">Cell membrane</keyword>
<keyword id="KW-0139">CF(1)</keyword>
<keyword id="KW-0375">Hydrogen ion transport</keyword>
<keyword id="KW-0406">Ion transport</keyword>
<keyword id="KW-0472">Membrane</keyword>
<keyword id="KW-0547">Nucleotide-binding</keyword>
<keyword id="KW-1278">Translocase</keyword>
<keyword id="KW-0813">Transport</keyword>
<name>ATPB_EDWI9</name>
<accession>C5BF40</accession>
<reference key="1">
    <citation type="submission" date="2009-03" db="EMBL/GenBank/DDBJ databases">
        <title>Complete genome sequence of Edwardsiella ictaluri 93-146.</title>
        <authorList>
            <person name="Williams M.L."/>
            <person name="Gillaspy A.F."/>
            <person name="Dyer D.W."/>
            <person name="Thune R.L."/>
            <person name="Waldbieser G.C."/>
            <person name="Schuster S.C."/>
            <person name="Gipson J."/>
            <person name="Zaitshik J."/>
            <person name="Landry C."/>
            <person name="Lawrence M.L."/>
        </authorList>
    </citation>
    <scope>NUCLEOTIDE SEQUENCE [LARGE SCALE GENOMIC DNA]</scope>
    <source>
        <strain>93-146</strain>
    </source>
</reference>
<gene>
    <name evidence="1" type="primary">atpD</name>
    <name type="ordered locus">NT01EI_3912</name>
</gene>